<evidence type="ECO:0000255" key="1">
    <source>
        <dbReference type="HAMAP-Rule" id="MF_01185"/>
    </source>
</evidence>
<sequence length="158" mass="17985">MKISTTRFGMIEISESDIILMRRGILGFEESKKYALLYQDVKNPFLWFQSLDDGATAFVVIDPFLLQPYYQPELNDDTLEKLEIDNPEDVALMVIVSIRSNPVLLTANLRAPIVINAAKKKACQVVLEDSRFPIRYDILKNREFLLGGHCYEISATAP</sequence>
<organism>
    <name type="scientific">Syntrophus aciditrophicus (strain SB)</name>
    <dbReference type="NCBI Taxonomy" id="56780"/>
    <lineage>
        <taxon>Bacteria</taxon>
        <taxon>Pseudomonadati</taxon>
        <taxon>Thermodesulfobacteriota</taxon>
        <taxon>Syntrophia</taxon>
        <taxon>Syntrophales</taxon>
        <taxon>Syntrophaceae</taxon>
        <taxon>Syntrophus</taxon>
    </lineage>
</organism>
<feature type="chain" id="PRO_0000273008" description="Flagellar assembly factor FliW">
    <location>
        <begin position="1"/>
        <end position="158"/>
    </location>
</feature>
<proteinExistence type="inferred from homology"/>
<reference key="1">
    <citation type="journal article" date="2007" name="Proc. Natl. Acad. Sci. U.S.A.">
        <title>The genome of Syntrophus aciditrophicus: life at the thermodynamic limit of microbial growth.</title>
        <authorList>
            <person name="McInerney M.J."/>
            <person name="Rohlin L."/>
            <person name="Mouttaki H."/>
            <person name="Kim U."/>
            <person name="Krupp R.S."/>
            <person name="Rios-Hernandez L."/>
            <person name="Sieber J."/>
            <person name="Struchtemeyer C.G."/>
            <person name="Bhattacharyya A."/>
            <person name="Campbell J.W."/>
            <person name="Gunsalus R.P."/>
        </authorList>
    </citation>
    <scope>NUCLEOTIDE SEQUENCE [LARGE SCALE GENOMIC DNA]</scope>
    <source>
        <strain>SB</strain>
    </source>
</reference>
<comment type="function">
    <text evidence="1">Acts as an anti-CsrA protein, binds CsrA and prevents it from repressing translation of its target genes, one of which is flagellin. Binds to flagellin and participates in the assembly of the flagellum.</text>
</comment>
<comment type="subunit">
    <text evidence="1">Interacts with translational regulator CsrA and flagellin(s).</text>
</comment>
<comment type="subcellular location">
    <subcellularLocation>
        <location evidence="1">Cytoplasm</location>
    </subcellularLocation>
</comment>
<comment type="similarity">
    <text evidence="1">Belongs to the FliW family.</text>
</comment>
<protein>
    <recommendedName>
        <fullName evidence="1">Flagellar assembly factor FliW</fullName>
    </recommendedName>
</protein>
<keyword id="KW-1005">Bacterial flagellum biogenesis</keyword>
<keyword id="KW-0143">Chaperone</keyword>
<keyword id="KW-0963">Cytoplasm</keyword>
<keyword id="KW-1185">Reference proteome</keyword>
<keyword id="KW-0810">Translation regulation</keyword>
<name>FLIW_SYNAS</name>
<accession>Q2LT32</accession>
<dbReference type="EMBL" id="CP000252">
    <property type="protein sequence ID" value="ABC77240.1"/>
    <property type="molecule type" value="Genomic_DNA"/>
</dbReference>
<dbReference type="RefSeq" id="WP_011417269.1">
    <property type="nucleotide sequence ID" value="NC_007759.1"/>
</dbReference>
<dbReference type="SMR" id="Q2LT32"/>
<dbReference type="STRING" id="56780.SYN_02809"/>
<dbReference type="KEGG" id="sat:SYN_02809"/>
<dbReference type="eggNOG" id="COG1699">
    <property type="taxonomic scope" value="Bacteria"/>
</dbReference>
<dbReference type="HOGENOM" id="CLU_112356_0_2_7"/>
<dbReference type="InParanoid" id="Q2LT32"/>
<dbReference type="OrthoDB" id="9801235at2"/>
<dbReference type="Proteomes" id="UP000001933">
    <property type="component" value="Chromosome"/>
</dbReference>
<dbReference type="GO" id="GO:0005737">
    <property type="term" value="C:cytoplasm"/>
    <property type="evidence" value="ECO:0007669"/>
    <property type="project" value="UniProtKB-SubCell"/>
</dbReference>
<dbReference type="GO" id="GO:0044780">
    <property type="term" value="P:bacterial-type flagellum assembly"/>
    <property type="evidence" value="ECO:0007669"/>
    <property type="project" value="UniProtKB-UniRule"/>
</dbReference>
<dbReference type="GO" id="GO:0006417">
    <property type="term" value="P:regulation of translation"/>
    <property type="evidence" value="ECO:0007669"/>
    <property type="project" value="UniProtKB-KW"/>
</dbReference>
<dbReference type="Gene3D" id="2.30.290.10">
    <property type="entry name" value="BH3618-like"/>
    <property type="match status" value="1"/>
</dbReference>
<dbReference type="HAMAP" id="MF_01185">
    <property type="entry name" value="FliW"/>
    <property type="match status" value="1"/>
</dbReference>
<dbReference type="InterPro" id="IPR003775">
    <property type="entry name" value="Flagellar_assembly_factor_FliW"/>
</dbReference>
<dbReference type="InterPro" id="IPR024046">
    <property type="entry name" value="Flagellar_assmbl_FliW_dom_sf"/>
</dbReference>
<dbReference type="NCBIfam" id="NF009793">
    <property type="entry name" value="PRK13285.1-1"/>
    <property type="match status" value="1"/>
</dbReference>
<dbReference type="PANTHER" id="PTHR39190">
    <property type="entry name" value="FLAGELLAR ASSEMBLY FACTOR FLIW"/>
    <property type="match status" value="1"/>
</dbReference>
<dbReference type="PANTHER" id="PTHR39190:SF1">
    <property type="entry name" value="FLAGELLAR ASSEMBLY FACTOR FLIW"/>
    <property type="match status" value="1"/>
</dbReference>
<dbReference type="Pfam" id="PF02623">
    <property type="entry name" value="FliW"/>
    <property type="match status" value="1"/>
</dbReference>
<dbReference type="SUPFAM" id="SSF141457">
    <property type="entry name" value="BH3618-like"/>
    <property type="match status" value="1"/>
</dbReference>
<gene>
    <name evidence="1" type="primary">fliW</name>
    <name type="ordered locus">SYNAS_13610</name>
    <name type="ORF">SYN_02809</name>
</gene>